<evidence type="ECO:0000305" key="1"/>
<reference key="1">
    <citation type="journal article" date="1989" name="Mol. Gen. Genet.">
        <title>Identification and characterization of the genes encoding three structural proteins of the Thermoproteus tenax virus TTV1.</title>
        <authorList>
            <person name="Neumann H."/>
            <person name="Schwass V."/>
            <person name="Eckerskorn C."/>
            <person name="Zillig W."/>
        </authorList>
    </citation>
    <scope>NUCLEOTIDE SEQUENCE [GENOMIC DNA]</scope>
    <scope>PROTEIN SEQUENCE OF 1-14</scope>
</reference>
<protein>
    <recommendedName>
        <fullName>Coat protein TP2</fullName>
    </recommendedName>
</protein>
<organism>
    <name type="scientific">Thermoproteus tenax virus 1 (strain KRA1)</name>
    <name type="common">TTV1</name>
    <dbReference type="NCBI Taxonomy" id="10480"/>
    <lineage>
        <taxon>Viruses</taxon>
        <taxon>Adnaviria</taxon>
        <taxon>Zilligvirae</taxon>
        <taxon>Taleaviricota</taxon>
        <taxon>Tokiviricetes</taxon>
        <taxon>Primavirales</taxon>
        <taxon>Tristromaviridae</taxon>
        <taxon>Betatristromavirus</taxon>
        <taxon>Betatristromavirus TTV1</taxon>
    </lineage>
</organism>
<comment type="subcellular location">
    <subcellularLocation>
        <location evidence="1">Virion</location>
    </subcellularLocation>
</comment>
<feature type="chain" id="PRO_0000222953" description="Coat protein TP2">
    <location>
        <begin position="1"/>
        <end position="139"/>
    </location>
</feature>
<dbReference type="EMBL" id="X14855">
    <property type="protein sequence ID" value="CAA32987.1"/>
    <property type="molecule type" value="Genomic_DNA"/>
</dbReference>
<dbReference type="PIR" id="S04393">
    <property type="entry name" value="S04393"/>
</dbReference>
<dbReference type="Proteomes" id="UP000009250">
    <property type="component" value="Genome"/>
</dbReference>
<dbReference type="GO" id="GO:0019028">
    <property type="term" value="C:viral capsid"/>
    <property type="evidence" value="ECO:0007669"/>
    <property type="project" value="UniProtKB-KW"/>
</dbReference>
<proteinExistence type="evidence at protein level"/>
<keyword id="KW-0167">Capsid protein</keyword>
<keyword id="KW-0903">Direct protein sequencing</keyword>
<keyword id="KW-1185">Reference proteome</keyword>
<keyword id="KW-0946">Virion</keyword>
<accession>P19271</accession>
<sequence length="139" mass="16340">MKVLRLGFTDKYIEKQEPIDVVFDKYQPLGYVAVVELPSRIPWIIEIQRREWIERFITMPRDIFRELSFDIIILRRKLEPTPQYRMIRDIVSDLRQSRGYASGMVILPNGLTYDGDLLEGIEVMEGVDVIAYTLGLIDF</sequence>
<organismHost>
    <name type="scientific">Thermoproteus tenax</name>
    <dbReference type="NCBI Taxonomy" id="2271"/>
</organismHost>
<name>COA2_TTV1K</name>